<accession>Q5HG31</accession>
<accession>Q9RL86</accession>
<feature type="signal peptide" evidence="2">
    <location>
        <begin position="1"/>
        <end position="20"/>
    </location>
</feature>
<feature type="chain" id="PRO_0000281656" description="Phosphate-binding protein PstS">
    <location>
        <begin position="21"/>
        <end position="327"/>
    </location>
</feature>
<feature type="region of interest" description="Disordered" evidence="3">
    <location>
        <begin position="307"/>
        <end position="327"/>
    </location>
</feature>
<feature type="lipid moiety-binding region" description="N-palmitoyl cysteine" evidence="2">
    <location>
        <position position="21"/>
    </location>
</feature>
<feature type="lipid moiety-binding region" description="S-diacylglycerol cysteine" evidence="2">
    <location>
        <position position="21"/>
    </location>
</feature>
<evidence type="ECO:0000250" key="1"/>
<evidence type="ECO:0000255" key="2">
    <source>
        <dbReference type="PROSITE-ProRule" id="PRU00303"/>
    </source>
</evidence>
<evidence type="ECO:0000256" key="3">
    <source>
        <dbReference type="SAM" id="MobiDB-lite"/>
    </source>
</evidence>
<evidence type="ECO:0000305" key="4"/>
<gene>
    <name type="primary">pstS</name>
    <name type="ordered locus">SACOL1424</name>
</gene>
<name>PSTS_STAAC</name>
<comment type="function">
    <text evidence="1">Part of the ABC transporter complex PstSACB involved in phosphate import.</text>
</comment>
<comment type="subunit">
    <text evidence="4">The complex is composed of two ATP-binding proteins (PstB), two transmembrane proteins (PstC and PstA) and a solute-binding protein (PstS).</text>
</comment>
<comment type="subcellular location">
    <subcellularLocation>
        <location evidence="4">Cell membrane</location>
        <topology evidence="4">Lipid-anchor</topology>
    </subcellularLocation>
</comment>
<comment type="similarity">
    <text evidence="4">Belongs to the PstS family.</text>
</comment>
<organism>
    <name type="scientific">Staphylococcus aureus (strain COL)</name>
    <dbReference type="NCBI Taxonomy" id="93062"/>
    <lineage>
        <taxon>Bacteria</taxon>
        <taxon>Bacillati</taxon>
        <taxon>Bacillota</taxon>
        <taxon>Bacilli</taxon>
        <taxon>Bacillales</taxon>
        <taxon>Staphylococcaceae</taxon>
        <taxon>Staphylococcus</taxon>
    </lineage>
</organism>
<reference key="1">
    <citation type="journal article" date="1999" name="Microb. Drug Resist.">
        <title>Antibiotic resistance as a stress response: complete sequencing of a large number of chromosomal loci in Staphylococcus aureus strain COL that impact on the expression of resistance to methicillin.</title>
        <authorList>
            <person name="de Lencastre H."/>
            <person name="Wu S.-W."/>
            <person name="Pinho M.G."/>
            <person name="Ludovice A.M."/>
            <person name="Filipe S."/>
            <person name="Gardete S."/>
            <person name="Sobral R."/>
            <person name="Gill S.R."/>
            <person name="Chung M."/>
            <person name="Tomasz A."/>
        </authorList>
    </citation>
    <scope>NUCLEOTIDE SEQUENCE [GENOMIC DNA]</scope>
</reference>
<reference key="2">
    <citation type="journal article" date="2005" name="J. Bacteriol.">
        <title>Insights on evolution of virulence and resistance from the complete genome analysis of an early methicillin-resistant Staphylococcus aureus strain and a biofilm-producing methicillin-resistant Staphylococcus epidermidis strain.</title>
        <authorList>
            <person name="Gill S.R."/>
            <person name="Fouts D.E."/>
            <person name="Archer G.L."/>
            <person name="Mongodin E.F."/>
            <person name="DeBoy R.T."/>
            <person name="Ravel J."/>
            <person name="Paulsen I.T."/>
            <person name="Kolonay J.F."/>
            <person name="Brinkac L.M."/>
            <person name="Beanan M.J."/>
            <person name="Dodson R.J."/>
            <person name="Daugherty S.C."/>
            <person name="Madupu R."/>
            <person name="Angiuoli S.V."/>
            <person name="Durkin A.S."/>
            <person name="Haft D.H."/>
            <person name="Vamathevan J.J."/>
            <person name="Khouri H."/>
            <person name="Utterback T.R."/>
            <person name="Lee C."/>
            <person name="Dimitrov G."/>
            <person name="Jiang L."/>
            <person name="Qin H."/>
            <person name="Weidman J."/>
            <person name="Tran K."/>
            <person name="Kang K.H."/>
            <person name="Hance I.R."/>
            <person name="Nelson K.E."/>
            <person name="Fraser C.M."/>
        </authorList>
    </citation>
    <scope>NUCLEOTIDE SEQUENCE [LARGE SCALE GENOMIC DNA]</scope>
    <source>
        <strain>COL</strain>
    </source>
</reference>
<protein>
    <recommendedName>
        <fullName>Phosphate-binding protein PstS</fullName>
        <shortName>PBP</shortName>
    </recommendedName>
</protein>
<sequence>MKKWQFVGTTALGATLLLGACGGGNGGSGNSDLKGEAKGDGSSTVAPIVEKLNEKWAQDHSDAKISAGQAGTGAGFQKFIAGDIDFADASRPIKDEEKQKLQDKNIKYKEFKIAQDGVTVAVNKENDFVDELDKQQLKAIYSGKAKTWKDVNSKWPDKKINAVSPNSSHGTYDFFENEVMNKEDIKAEKNADTNAIVSSVTKNKEGIGYFGYNFYVQNKDKLKEVKIKDENGKATEPTKKTIQDNSYALSRPLFIYVNEKALKDNKVMSEFIKFVLEDKGKAAEEAGYVAAPEKTYKSQLDDLKAFIDKNQKSDDKKSDDKKSEDKK</sequence>
<keyword id="KW-1003">Cell membrane</keyword>
<keyword id="KW-0449">Lipoprotein</keyword>
<keyword id="KW-0472">Membrane</keyword>
<keyword id="KW-0564">Palmitate</keyword>
<keyword id="KW-0592">Phosphate transport</keyword>
<keyword id="KW-0732">Signal</keyword>
<keyword id="KW-0813">Transport</keyword>
<dbReference type="EMBL" id="Y18637">
    <property type="protein sequence ID" value="CAB60743.1"/>
    <property type="molecule type" value="Genomic_DNA"/>
</dbReference>
<dbReference type="EMBL" id="CP000046">
    <property type="protein sequence ID" value="AAW38169.1"/>
    <property type="molecule type" value="Genomic_DNA"/>
</dbReference>
<dbReference type="RefSeq" id="WP_000759232.1">
    <property type="nucleotide sequence ID" value="NZ_JBGOFO010000003.1"/>
</dbReference>
<dbReference type="SMR" id="Q5HG31"/>
<dbReference type="KEGG" id="sac:SACOL1424"/>
<dbReference type="HOGENOM" id="CLU_026228_1_1_9"/>
<dbReference type="Proteomes" id="UP000000530">
    <property type="component" value="Chromosome"/>
</dbReference>
<dbReference type="GO" id="GO:0005886">
    <property type="term" value="C:plasma membrane"/>
    <property type="evidence" value="ECO:0007669"/>
    <property type="project" value="UniProtKB-SubCell"/>
</dbReference>
<dbReference type="GO" id="GO:0042301">
    <property type="term" value="F:phosphate ion binding"/>
    <property type="evidence" value="ECO:0007669"/>
    <property type="project" value="InterPro"/>
</dbReference>
<dbReference type="GO" id="GO:0006817">
    <property type="term" value="P:phosphate ion transport"/>
    <property type="evidence" value="ECO:0007669"/>
    <property type="project" value="UniProtKB-KW"/>
</dbReference>
<dbReference type="CDD" id="cd13654">
    <property type="entry name" value="PBP2_phosphate_like_2"/>
    <property type="match status" value="1"/>
</dbReference>
<dbReference type="Gene3D" id="3.40.190.10">
    <property type="entry name" value="Periplasmic binding protein-like II"/>
    <property type="match status" value="2"/>
</dbReference>
<dbReference type="InterPro" id="IPR024370">
    <property type="entry name" value="PBP_domain"/>
</dbReference>
<dbReference type="InterPro" id="IPR011862">
    <property type="entry name" value="Phos-bd"/>
</dbReference>
<dbReference type="InterPro" id="IPR050811">
    <property type="entry name" value="Phosphate_ABC_transporter"/>
</dbReference>
<dbReference type="NCBIfam" id="TIGR02136">
    <property type="entry name" value="ptsS_2"/>
    <property type="match status" value="1"/>
</dbReference>
<dbReference type="PANTHER" id="PTHR30570">
    <property type="entry name" value="PERIPLASMIC PHOSPHATE BINDING COMPONENT OF PHOSPHATE ABC TRANSPORTER"/>
    <property type="match status" value="1"/>
</dbReference>
<dbReference type="PANTHER" id="PTHR30570:SF1">
    <property type="entry name" value="PHOSPHATE-BINDING PROTEIN PSTS"/>
    <property type="match status" value="1"/>
</dbReference>
<dbReference type="Pfam" id="PF12849">
    <property type="entry name" value="PBP_like_2"/>
    <property type="match status" value="1"/>
</dbReference>
<dbReference type="SUPFAM" id="SSF53850">
    <property type="entry name" value="Periplasmic binding protein-like II"/>
    <property type="match status" value="1"/>
</dbReference>
<dbReference type="PROSITE" id="PS51257">
    <property type="entry name" value="PROKAR_LIPOPROTEIN"/>
    <property type="match status" value="1"/>
</dbReference>
<proteinExistence type="inferred from homology"/>